<name>Y313_MYCTU</name>
<accession>P9WL03</accession>
<accession>L0T632</accession>
<accession>O07240</accession>
<accession>Q7DA15</accession>
<reference key="1">
    <citation type="journal article" date="1998" name="Nature">
        <title>Deciphering the biology of Mycobacterium tuberculosis from the complete genome sequence.</title>
        <authorList>
            <person name="Cole S.T."/>
            <person name="Brosch R."/>
            <person name="Parkhill J."/>
            <person name="Garnier T."/>
            <person name="Churcher C.M."/>
            <person name="Harris D.E."/>
            <person name="Gordon S.V."/>
            <person name="Eiglmeier K."/>
            <person name="Gas S."/>
            <person name="Barry C.E. III"/>
            <person name="Tekaia F."/>
            <person name="Badcock K."/>
            <person name="Basham D."/>
            <person name="Brown D."/>
            <person name="Chillingworth T."/>
            <person name="Connor R."/>
            <person name="Davies R.M."/>
            <person name="Devlin K."/>
            <person name="Feltwell T."/>
            <person name="Gentles S."/>
            <person name="Hamlin N."/>
            <person name="Holroyd S."/>
            <person name="Hornsby T."/>
            <person name="Jagels K."/>
            <person name="Krogh A."/>
            <person name="McLean J."/>
            <person name="Moule S."/>
            <person name="Murphy L.D."/>
            <person name="Oliver S."/>
            <person name="Osborne J."/>
            <person name="Quail M.A."/>
            <person name="Rajandream M.A."/>
            <person name="Rogers J."/>
            <person name="Rutter S."/>
            <person name="Seeger K."/>
            <person name="Skelton S."/>
            <person name="Squares S."/>
            <person name="Squares R."/>
            <person name="Sulston J.E."/>
            <person name="Taylor K."/>
            <person name="Whitehead S."/>
            <person name="Barrell B.G."/>
        </authorList>
    </citation>
    <scope>NUCLEOTIDE SEQUENCE [LARGE SCALE GENOMIC DNA]</scope>
    <source>
        <strain>ATCC 25618 / H37Rv</strain>
    </source>
</reference>
<reference key="2">
    <citation type="journal article" date="2007" name="Microbiology">
        <title>Experimental determination of translational starts using peptide mass mapping and tandem mass spectrometry within the proteome of Mycobacterium tuberculosis.</title>
        <authorList>
            <person name="Rison S.C."/>
            <person name="Mattow J."/>
            <person name="Jungblut P.R."/>
            <person name="Stoker N.G."/>
        </authorList>
    </citation>
    <scope>IDENTIFICATION BY MASS SPECTROMETRY</scope>
    <scope>DETERMINATION OF TRANSLATIONAL START SITE</scope>
    <scope>CLEAVAGE OF INITIATOR METHIONINE</scope>
    <source>
        <strain>ATCC 25618 / H37Rv</strain>
    </source>
</reference>
<reference key="3">
    <citation type="journal article" date="2011" name="Mol. Cell. Proteomics">
        <title>Proteogenomic analysis of Mycobacterium tuberculosis by high resolution mass spectrometry.</title>
        <authorList>
            <person name="Kelkar D.S."/>
            <person name="Kumar D."/>
            <person name="Kumar P."/>
            <person name="Balakrishnan L."/>
            <person name="Muthusamy B."/>
            <person name="Yadav A.K."/>
            <person name="Shrivastava P."/>
            <person name="Marimuthu A."/>
            <person name="Anand S."/>
            <person name="Sundaram H."/>
            <person name="Kingsbury R."/>
            <person name="Harsha H.C."/>
            <person name="Nair B."/>
            <person name="Prasad T.S."/>
            <person name="Chauhan D.S."/>
            <person name="Katoch K."/>
            <person name="Katoch V.M."/>
            <person name="Kumar P."/>
            <person name="Chaerkady R."/>
            <person name="Ramachandran S."/>
            <person name="Dash D."/>
            <person name="Pandey A."/>
        </authorList>
    </citation>
    <scope>IDENTIFICATION BY MASS SPECTROMETRY [LARGE SCALE ANALYSIS]</scope>
    <source>
        <strain>ATCC 25618 / H37Rv</strain>
    </source>
</reference>
<organism>
    <name type="scientific">Mycobacterium tuberculosis (strain ATCC 25618 / H37Rv)</name>
    <dbReference type="NCBI Taxonomy" id="83332"/>
    <lineage>
        <taxon>Bacteria</taxon>
        <taxon>Bacillati</taxon>
        <taxon>Actinomycetota</taxon>
        <taxon>Actinomycetes</taxon>
        <taxon>Mycobacteriales</taxon>
        <taxon>Mycobacteriaceae</taxon>
        <taxon>Mycobacterium</taxon>
        <taxon>Mycobacterium tuberculosis complex</taxon>
    </lineage>
</organism>
<dbReference type="EMBL" id="AL123456">
    <property type="protein sequence ID" value="CCP43043.1"/>
    <property type="molecule type" value="Genomic_DNA"/>
</dbReference>
<dbReference type="PIR" id="B70525">
    <property type="entry name" value="B70525"/>
</dbReference>
<dbReference type="RefSeq" id="NP_214827.1">
    <property type="nucleotide sequence ID" value="NC_000962.3"/>
</dbReference>
<dbReference type="RefSeq" id="WP_003401613.1">
    <property type="nucleotide sequence ID" value="NZ_NVQJ01000026.1"/>
</dbReference>
<dbReference type="PaxDb" id="83332-Rv0313"/>
<dbReference type="DNASU" id="886572"/>
<dbReference type="GeneID" id="886572"/>
<dbReference type="KEGG" id="mtu:Rv0313"/>
<dbReference type="KEGG" id="mtv:RVBD_0313"/>
<dbReference type="TubercuList" id="Rv0313"/>
<dbReference type="eggNOG" id="ENOG50341FE">
    <property type="taxonomic scope" value="Bacteria"/>
</dbReference>
<dbReference type="InParanoid" id="P9WL03"/>
<dbReference type="OrthoDB" id="4773538at2"/>
<dbReference type="Proteomes" id="UP000001584">
    <property type="component" value="Chromosome"/>
</dbReference>
<gene>
    <name type="ordered locus">Rv0313</name>
</gene>
<protein>
    <recommendedName>
        <fullName>Uncharacterized protein Rv0313</fullName>
    </recommendedName>
</protein>
<evidence type="ECO:0000269" key="1">
    <source>
    </source>
</evidence>
<sequence>MGDYGPFGFDPDEFDRVIREGSEGLRDAFERIGRFLSSSGAGTGWSAIFEDLSRRSRPAPETAGEAGDGVWAIYTVDADGGARVEQVYATELDALRANKDNTDPKRKVRFLPYGIAVSVLDDPVDEAQ</sequence>
<keyword id="KW-1185">Reference proteome</keyword>
<proteinExistence type="evidence at protein level"/>
<feature type="initiator methionine" description="Removed" evidence="1">
    <location>
        <position position="1"/>
    </location>
</feature>
<feature type="chain" id="PRO_0000403671" description="Uncharacterized protein Rv0313">
    <location>
        <begin position="2"/>
        <end position="128"/>
    </location>
</feature>